<organism>
    <name type="scientific">Mycobacterium tuberculosis (strain ATCC 25618 / H37Rv)</name>
    <dbReference type="NCBI Taxonomy" id="83332"/>
    <lineage>
        <taxon>Bacteria</taxon>
        <taxon>Bacillati</taxon>
        <taxon>Actinomycetota</taxon>
        <taxon>Actinomycetes</taxon>
        <taxon>Mycobacteriales</taxon>
        <taxon>Mycobacteriaceae</taxon>
        <taxon>Mycobacterium</taxon>
        <taxon>Mycobacterium tuberculosis complex</taxon>
    </lineage>
</organism>
<reference key="1">
    <citation type="journal article" date="1998" name="Nature">
        <title>Deciphering the biology of Mycobacterium tuberculosis from the complete genome sequence.</title>
        <authorList>
            <person name="Cole S.T."/>
            <person name="Brosch R."/>
            <person name="Parkhill J."/>
            <person name="Garnier T."/>
            <person name="Churcher C.M."/>
            <person name="Harris D.E."/>
            <person name="Gordon S.V."/>
            <person name="Eiglmeier K."/>
            <person name="Gas S."/>
            <person name="Barry C.E. III"/>
            <person name="Tekaia F."/>
            <person name="Badcock K."/>
            <person name="Basham D."/>
            <person name="Brown D."/>
            <person name="Chillingworth T."/>
            <person name="Connor R."/>
            <person name="Davies R.M."/>
            <person name="Devlin K."/>
            <person name="Feltwell T."/>
            <person name="Gentles S."/>
            <person name="Hamlin N."/>
            <person name="Holroyd S."/>
            <person name="Hornsby T."/>
            <person name="Jagels K."/>
            <person name="Krogh A."/>
            <person name="McLean J."/>
            <person name="Moule S."/>
            <person name="Murphy L.D."/>
            <person name="Oliver S."/>
            <person name="Osborne J."/>
            <person name="Quail M.A."/>
            <person name="Rajandream M.A."/>
            <person name="Rogers J."/>
            <person name="Rutter S."/>
            <person name="Seeger K."/>
            <person name="Skelton S."/>
            <person name="Squares S."/>
            <person name="Squares R."/>
            <person name="Sulston J.E."/>
            <person name="Taylor K."/>
            <person name="Whitehead S."/>
            <person name="Barrell B.G."/>
        </authorList>
    </citation>
    <scope>NUCLEOTIDE SEQUENCE [LARGE SCALE GENOMIC DNA]</scope>
    <source>
        <strain>ATCC 25618 / H37Rv</strain>
    </source>
</reference>
<sequence length="91" mass="9512">MSVENSQIREPPPLPPVLLEVWPVIAVGALAWLVAAVAAFVVPGLASWRPVTVAGLATGLLGTTIFVWQLAAARRGARGAQAGLETYLDPK</sequence>
<protein>
    <recommendedName>
        <fullName>Uncharacterized protein Rv0879c</fullName>
    </recommendedName>
</protein>
<comment type="subcellular location">
    <subcellularLocation>
        <location evidence="2">Cell membrane</location>
        <topology evidence="2">Multi-pass membrane protein</topology>
    </subcellularLocation>
</comment>
<proteinExistence type="predicted"/>
<keyword id="KW-1003">Cell membrane</keyword>
<keyword id="KW-0472">Membrane</keyword>
<keyword id="KW-1185">Reference proteome</keyword>
<keyword id="KW-0812">Transmembrane</keyword>
<keyword id="KW-1133">Transmembrane helix</keyword>
<gene>
    <name type="ordered locus">Rv0879c</name>
    <name type="ORF">MTCY31.07c</name>
</gene>
<feature type="chain" id="PRO_0000103723" description="Uncharacterized protein Rv0879c">
    <location>
        <begin position="1"/>
        <end position="91"/>
    </location>
</feature>
<feature type="transmembrane region" description="Helical" evidence="1">
    <location>
        <begin position="22"/>
        <end position="42"/>
    </location>
</feature>
<feature type="transmembrane region" description="Helical" evidence="1">
    <location>
        <begin position="53"/>
        <end position="73"/>
    </location>
</feature>
<evidence type="ECO:0000255" key="1"/>
<evidence type="ECO:0000305" key="2"/>
<dbReference type="EMBL" id="AL123456">
    <property type="protein sequence ID" value="CCP43627.1"/>
    <property type="molecule type" value="Genomic_DNA"/>
</dbReference>
<dbReference type="PIR" id="D70780">
    <property type="entry name" value="D70780"/>
</dbReference>
<dbReference type="RefSeq" id="NP_215394.1">
    <property type="nucleotide sequence ID" value="NC_000962.3"/>
</dbReference>
<dbReference type="RefSeq" id="WP_003404603.1">
    <property type="nucleotide sequence ID" value="NZ_NVQJ01000001.1"/>
</dbReference>
<dbReference type="STRING" id="83332.Rv0879c"/>
<dbReference type="PaxDb" id="83332-Rv0879c"/>
<dbReference type="DNASU" id="885095"/>
<dbReference type="GeneID" id="885095"/>
<dbReference type="KEGG" id="mtu:Rv0879c"/>
<dbReference type="KEGG" id="mtv:RVBD_0879c"/>
<dbReference type="TubercuList" id="Rv0879c"/>
<dbReference type="eggNOG" id="ENOG5033IM2">
    <property type="taxonomic scope" value="Bacteria"/>
</dbReference>
<dbReference type="InParanoid" id="P9WKR1"/>
<dbReference type="Proteomes" id="UP000001584">
    <property type="component" value="Chromosome"/>
</dbReference>
<dbReference type="GO" id="GO:0005886">
    <property type="term" value="C:plasma membrane"/>
    <property type="evidence" value="ECO:0007669"/>
    <property type="project" value="UniProtKB-SubCell"/>
</dbReference>
<dbReference type="InterPro" id="IPR019681">
    <property type="entry name" value="DUF2530"/>
</dbReference>
<dbReference type="Pfam" id="PF10745">
    <property type="entry name" value="DUF2530"/>
    <property type="match status" value="1"/>
</dbReference>
<name>Y879_MYCTU</name>
<accession>P9WKR1</accession>
<accession>L0T7Z8</accession>
<accession>P64735</accession>
<accession>Q10541</accession>